<sequence length="166" mass="18461">MSDQDALDTQEKELLEMKERVAEMEAEAAKLRAMQEQLDNETEALRNDKESIDAQSVYVGNVDYSVTPEELQSHFASCGSVNRVTILCDKFTGHPKGFAYIEFSEPSLVPNALLLNGSMLHERPLKVTPKRTNVPGMSRGRGRGRGRGRGRGRGGYRGRARGFAPY</sequence>
<reference key="1">
    <citation type="journal article" date="2002" name="Nature">
        <title>The genome sequence of Schizosaccharomyces pombe.</title>
        <authorList>
            <person name="Wood V."/>
            <person name="Gwilliam R."/>
            <person name="Rajandream M.A."/>
            <person name="Lyne M.H."/>
            <person name="Lyne R."/>
            <person name="Stewart A."/>
            <person name="Sgouros J.G."/>
            <person name="Peat N."/>
            <person name="Hayles J."/>
            <person name="Baker S.G."/>
            <person name="Basham D."/>
            <person name="Bowman S."/>
            <person name="Brooks K."/>
            <person name="Brown D."/>
            <person name="Brown S."/>
            <person name="Chillingworth T."/>
            <person name="Churcher C.M."/>
            <person name="Collins M."/>
            <person name="Connor R."/>
            <person name="Cronin A."/>
            <person name="Davis P."/>
            <person name="Feltwell T."/>
            <person name="Fraser A."/>
            <person name="Gentles S."/>
            <person name="Goble A."/>
            <person name="Hamlin N."/>
            <person name="Harris D.E."/>
            <person name="Hidalgo J."/>
            <person name="Hodgson G."/>
            <person name="Holroyd S."/>
            <person name="Hornsby T."/>
            <person name="Howarth S."/>
            <person name="Huckle E.J."/>
            <person name="Hunt S."/>
            <person name="Jagels K."/>
            <person name="James K.D."/>
            <person name="Jones L."/>
            <person name="Jones M."/>
            <person name="Leather S."/>
            <person name="McDonald S."/>
            <person name="McLean J."/>
            <person name="Mooney P."/>
            <person name="Moule S."/>
            <person name="Mungall K.L."/>
            <person name="Murphy L.D."/>
            <person name="Niblett D."/>
            <person name="Odell C."/>
            <person name="Oliver K."/>
            <person name="O'Neil S."/>
            <person name="Pearson D."/>
            <person name="Quail M.A."/>
            <person name="Rabbinowitsch E."/>
            <person name="Rutherford K.M."/>
            <person name="Rutter S."/>
            <person name="Saunders D."/>
            <person name="Seeger K."/>
            <person name="Sharp S."/>
            <person name="Skelton J."/>
            <person name="Simmonds M.N."/>
            <person name="Squares R."/>
            <person name="Squares S."/>
            <person name="Stevens K."/>
            <person name="Taylor K."/>
            <person name="Taylor R.G."/>
            <person name="Tivey A."/>
            <person name="Walsh S.V."/>
            <person name="Warren T."/>
            <person name="Whitehead S."/>
            <person name="Woodward J.R."/>
            <person name="Volckaert G."/>
            <person name="Aert R."/>
            <person name="Robben J."/>
            <person name="Grymonprez B."/>
            <person name="Weltjens I."/>
            <person name="Vanstreels E."/>
            <person name="Rieger M."/>
            <person name="Schaefer M."/>
            <person name="Mueller-Auer S."/>
            <person name="Gabel C."/>
            <person name="Fuchs M."/>
            <person name="Duesterhoeft A."/>
            <person name="Fritzc C."/>
            <person name="Holzer E."/>
            <person name="Moestl D."/>
            <person name="Hilbert H."/>
            <person name="Borzym K."/>
            <person name="Langer I."/>
            <person name="Beck A."/>
            <person name="Lehrach H."/>
            <person name="Reinhardt R."/>
            <person name="Pohl T.M."/>
            <person name="Eger P."/>
            <person name="Zimmermann W."/>
            <person name="Wedler H."/>
            <person name="Wambutt R."/>
            <person name="Purnelle B."/>
            <person name="Goffeau A."/>
            <person name="Cadieu E."/>
            <person name="Dreano S."/>
            <person name="Gloux S."/>
            <person name="Lelaure V."/>
            <person name="Mottier S."/>
            <person name="Galibert F."/>
            <person name="Aves S.J."/>
            <person name="Xiang Z."/>
            <person name="Hunt C."/>
            <person name="Moore K."/>
            <person name="Hurst S.M."/>
            <person name="Lucas M."/>
            <person name="Rochet M."/>
            <person name="Gaillardin C."/>
            <person name="Tallada V.A."/>
            <person name="Garzon A."/>
            <person name="Thode G."/>
            <person name="Daga R.R."/>
            <person name="Cruzado L."/>
            <person name="Jimenez J."/>
            <person name="Sanchez M."/>
            <person name="del Rey F."/>
            <person name="Benito J."/>
            <person name="Dominguez A."/>
            <person name="Revuelta J.L."/>
            <person name="Moreno S."/>
            <person name="Armstrong J."/>
            <person name="Forsburg S.L."/>
            <person name="Cerutti L."/>
            <person name="Lowe T."/>
            <person name="McCombie W.R."/>
            <person name="Paulsen I."/>
            <person name="Potashkin J."/>
            <person name="Shpakovski G.V."/>
            <person name="Ussery D."/>
            <person name="Barrell B.G."/>
            <person name="Nurse P."/>
        </authorList>
    </citation>
    <scope>NUCLEOTIDE SEQUENCE [LARGE SCALE GENOMIC DNA]</scope>
    <source>
        <strain>972 / ATCC 24843</strain>
    </source>
</reference>
<gene>
    <name type="primary">pab2</name>
    <name type="ORF">SPBC16E9.12c</name>
</gene>
<proteinExistence type="evidence at protein level"/>
<name>PAB2_SCHPO</name>
<organism>
    <name type="scientific">Schizosaccharomyces pombe (strain 972 / ATCC 24843)</name>
    <name type="common">Fission yeast</name>
    <dbReference type="NCBI Taxonomy" id="284812"/>
    <lineage>
        <taxon>Eukaryota</taxon>
        <taxon>Fungi</taxon>
        <taxon>Dikarya</taxon>
        <taxon>Ascomycota</taxon>
        <taxon>Taphrinomycotina</taxon>
        <taxon>Schizosaccharomycetes</taxon>
        <taxon>Schizosaccharomycetales</taxon>
        <taxon>Schizosaccharomycetaceae</taxon>
        <taxon>Schizosaccharomyces</taxon>
    </lineage>
</organism>
<keyword id="KW-0539">Nucleus</keyword>
<keyword id="KW-1185">Reference proteome</keyword>
<keyword id="KW-0694">RNA-binding</keyword>
<feature type="chain" id="PRO_0000081721" description="Polyadenylate-binding protein 2">
    <location>
        <begin position="1"/>
        <end position="166"/>
    </location>
</feature>
<feature type="domain" description="RRM" evidence="2">
    <location>
        <begin position="55"/>
        <end position="132"/>
    </location>
</feature>
<feature type="region of interest" description="Disordered" evidence="3">
    <location>
        <begin position="129"/>
        <end position="166"/>
    </location>
</feature>
<feature type="compositionally biased region" description="Basic residues" evidence="3">
    <location>
        <begin position="140"/>
        <end position="160"/>
    </location>
</feature>
<accession>O14327</accession>
<evidence type="ECO:0000250" key="1"/>
<evidence type="ECO:0000255" key="2">
    <source>
        <dbReference type="PROSITE-ProRule" id="PRU00176"/>
    </source>
</evidence>
<evidence type="ECO:0000256" key="3">
    <source>
        <dbReference type="SAM" id="MobiDB-lite"/>
    </source>
</evidence>
<comment type="interaction">
    <interactant intactId="EBI-7997255">
        <id>O14327</id>
    </interactant>
    <interactant intactId="EBI-7997069">
        <id>O74958</id>
        <label>mmi1</label>
    </interactant>
    <organismsDiffer>false</organismsDiffer>
    <experiments>4</experiments>
</comment>
<comment type="interaction">
    <interactant intactId="EBI-7997255">
        <id>O14327</id>
    </interactant>
    <interactant intactId="EBI-8993741">
        <id>Q9USP9</id>
        <label>SPBC902.04</label>
    </interactant>
    <organismsDiffer>false</organismsDiffer>
    <experiments>2</experiments>
</comment>
<comment type="subcellular location">
    <subcellularLocation>
        <location evidence="1">Nucleus</location>
    </subcellularLocation>
</comment>
<protein>
    <recommendedName>
        <fullName>Polyadenylate-binding protein 2</fullName>
        <shortName>PABP-2</shortName>
        <shortName>Poly(A)-binding protein 2</shortName>
    </recommendedName>
    <alternativeName>
        <fullName>Poly(A)-binding protein II</fullName>
        <shortName>PABII</shortName>
    </alternativeName>
</protein>
<dbReference type="EMBL" id="CU329671">
    <property type="protein sequence ID" value="CAB16904.1"/>
    <property type="molecule type" value="Genomic_DNA"/>
</dbReference>
<dbReference type="PIR" id="T39586">
    <property type="entry name" value="T39586"/>
</dbReference>
<dbReference type="RefSeq" id="NP_595794.1">
    <property type="nucleotide sequence ID" value="NM_001021695.2"/>
</dbReference>
<dbReference type="SMR" id="O14327"/>
<dbReference type="BioGRID" id="276285">
    <property type="interactions" value="313"/>
</dbReference>
<dbReference type="FunCoup" id="O14327">
    <property type="interactions" value="641"/>
</dbReference>
<dbReference type="IntAct" id="O14327">
    <property type="interactions" value="4"/>
</dbReference>
<dbReference type="MINT" id="O14327"/>
<dbReference type="STRING" id="284812.O14327"/>
<dbReference type="iPTMnet" id="O14327"/>
<dbReference type="PaxDb" id="4896-SPBC16E9.12c.1"/>
<dbReference type="EnsemblFungi" id="SPBC16E9.12c.1">
    <property type="protein sequence ID" value="SPBC16E9.12c.1:pep"/>
    <property type="gene ID" value="SPBC16E9.12c"/>
</dbReference>
<dbReference type="GeneID" id="2539733"/>
<dbReference type="KEGG" id="spo:2539733"/>
<dbReference type="PomBase" id="SPBC16E9.12c">
    <property type="gene designation" value="pab2"/>
</dbReference>
<dbReference type="VEuPathDB" id="FungiDB:SPBC16E9.12c"/>
<dbReference type="eggNOG" id="KOG4209">
    <property type="taxonomic scope" value="Eukaryota"/>
</dbReference>
<dbReference type="HOGENOM" id="CLU_012062_23_3_1"/>
<dbReference type="InParanoid" id="O14327"/>
<dbReference type="OMA" id="YRGRATY"/>
<dbReference type="PhylomeDB" id="O14327"/>
<dbReference type="PRO" id="PR:O14327"/>
<dbReference type="Proteomes" id="UP000002485">
    <property type="component" value="Chromosome II"/>
</dbReference>
<dbReference type="GO" id="GO:0000785">
    <property type="term" value="C:chromatin"/>
    <property type="evidence" value="ECO:0000314"/>
    <property type="project" value="PomBase"/>
</dbReference>
<dbReference type="GO" id="GO:0071920">
    <property type="term" value="C:cleavage body"/>
    <property type="evidence" value="ECO:0000314"/>
    <property type="project" value="PomBase"/>
</dbReference>
<dbReference type="GO" id="GO:0005737">
    <property type="term" value="C:cytoplasm"/>
    <property type="evidence" value="ECO:0000314"/>
    <property type="project" value="PomBase"/>
</dbReference>
<dbReference type="GO" id="GO:0033620">
    <property type="term" value="C:Mei2 nuclear dot complex"/>
    <property type="evidence" value="ECO:0000314"/>
    <property type="project" value="PomBase"/>
</dbReference>
<dbReference type="GO" id="GO:0016604">
    <property type="term" value="C:nuclear body"/>
    <property type="evidence" value="ECO:0000314"/>
    <property type="project" value="PomBase"/>
</dbReference>
<dbReference type="GO" id="GO:1990251">
    <property type="term" value="C:nuclear exosome focus"/>
    <property type="evidence" value="ECO:0000314"/>
    <property type="project" value="PomBase"/>
</dbReference>
<dbReference type="GO" id="GO:0140602">
    <property type="term" value="C:nucleolar peripheral inclusion body"/>
    <property type="evidence" value="ECO:0000314"/>
    <property type="project" value="PomBase"/>
</dbReference>
<dbReference type="GO" id="GO:0005730">
    <property type="term" value="C:nucleolus"/>
    <property type="evidence" value="ECO:0000314"/>
    <property type="project" value="PomBase"/>
</dbReference>
<dbReference type="GO" id="GO:0005654">
    <property type="term" value="C:nucleoplasm"/>
    <property type="evidence" value="ECO:0000314"/>
    <property type="project" value="PomBase"/>
</dbReference>
<dbReference type="GO" id="GO:0005634">
    <property type="term" value="C:nucleus"/>
    <property type="evidence" value="ECO:0000314"/>
    <property type="project" value="PomBase"/>
</dbReference>
<dbReference type="GO" id="GO:0106222">
    <property type="term" value="F:lncRNA binding"/>
    <property type="evidence" value="ECO:0000353"/>
    <property type="project" value="PomBase"/>
</dbReference>
<dbReference type="GO" id="GO:0008143">
    <property type="term" value="F:poly(A) binding"/>
    <property type="evidence" value="ECO:0000314"/>
    <property type="project" value="PomBase"/>
</dbReference>
<dbReference type="GO" id="GO:0140517">
    <property type="term" value="F:protein-RNA adaptor activity"/>
    <property type="evidence" value="ECO:0000353"/>
    <property type="project" value="PomBase"/>
</dbReference>
<dbReference type="GO" id="GO:0033621">
    <property type="term" value="P:nuclear mRNA surveillance of meiosis-specific transcripts"/>
    <property type="evidence" value="ECO:0000315"/>
    <property type="project" value="PomBase"/>
</dbReference>
<dbReference type="CDD" id="cd12306">
    <property type="entry name" value="RRM_II_PABPs"/>
    <property type="match status" value="1"/>
</dbReference>
<dbReference type="Gene3D" id="3.30.70.330">
    <property type="match status" value="1"/>
</dbReference>
<dbReference type="InterPro" id="IPR012677">
    <property type="entry name" value="Nucleotide-bd_a/b_plait_sf"/>
</dbReference>
<dbReference type="InterPro" id="IPR035979">
    <property type="entry name" value="RBD_domain_sf"/>
</dbReference>
<dbReference type="InterPro" id="IPR000504">
    <property type="entry name" value="RRM_dom"/>
</dbReference>
<dbReference type="PANTHER" id="PTHR23236:SF12">
    <property type="entry name" value="EUKARYOTIC INITIATION FACTOR 4B-RELATED"/>
    <property type="match status" value="1"/>
</dbReference>
<dbReference type="PANTHER" id="PTHR23236">
    <property type="entry name" value="EUKARYOTIC TRANSLATION INITIATION FACTOR 4B/4H"/>
    <property type="match status" value="1"/>
</dbReference>
<dbReference type="Pfam" id="PF00076">
    <property type="entry name" value="RRM_1"/>
    <property type="match status" value="1"/>
</dbReference>
<dbReference type="SMART" id="SM00360">
    <property type="entry name" value="RRM"/>
    <property type="match status" value="1"/>
</dbReference>
<dbReference type="SUPFAM" id="SSF54928">
    <property type="entry name" value="RNA-binding domain, RBD"/>
    <property type="match status" value="1"/>
</dbReference>
<dbReference type="PROSITE" id="PS50102">
    <property type="entry name" value="RRM"/>
    <property type="match status" value="1"/>
</dbReference>